<protein>
    <recommendedName>
        <fullName evidence="1">Major capsid protein</fullName>
    </recommendedName>
    <alternativeName>
        <fullName evidence="4">Gene product 24</fullName>
        <shortName>gp24</shortName>
    </alternativeName>
    <alternativeName>
        <fullName evidence="1">Major head protein</fullName>
    </alternativeName>
</protein>
<accession>Q9T1S4</accession>
<comment type="function">
    <text evidence="1">Assembles to form an icosahedral capsid.</text>
</comment>
<comment type="subcellular location">
    <subcellularLocation>
        <location evidence="1">Virion</location>
    </subcellularLocation>
    <text evidence="1">Forms the capsid icosahedric shell.</text>
</comment>
<comment type="similarity">
    <text evidence="4">Belongs to the P22 phage major capsid protein family.</text>
</comment>
<gene>
    <name type="primary">24</name>
</gene>
<evidence type="ECO:0000250" key="1">
    <source>
        <dbReference type="UniProtKB" id="P26747"/>
    </source>
</evidence>
<evidence type="ECO:0000256" key="2">
    <source>
        <dbReference type="SAM" id="MobiDB-lite"/>
    </source>
</evidence>
<evidence type="ECO:0000269" key="3">
    <source>
    </source>
</evidence>
<evidence type="ECO:0000305" key="4"/>
<feature type="initiator methionine" description="Removed; by host" evidence="3">
    <location>
        <position position="1"/>
    </location>
</feature>
<feature type="chain" id="PRO_0000077849" description="Major capsid protein">
    <location>
        <begin position="2"/>
        <end position="423"/>
    </location>
</feature>
<feature type="region of interest" description="Disordered" evidence="2">
    <location>
        <begin position="47"/>
        <end position="67"/>
    </location>
</feature>
<feature type="compositionally biased region" description="Basic and acidic residues" evidence="2">
    <location>
        <begin position="56"/>
        <end position="67"/>
    </location>
</feature>
<name>CAPSD_BPAPS</name>
<sequence length="423" mass="46103">MANNLESNISQIVLKKFLPGFMSDIVLCKTVDRQLLSGEINSNTGDSVSFKRPHQFKSERTETGDITGKDKNGLFSAKATGKVGKYITVAVEWTQIEEALKLNQLDQILSPIHERMVTDLETELAHFMMNNGALSLGSPNTAIKKWADVAQTASFIKDIGIKTGENYAIMDPWSAQRLADAQSGLHAADQLVRTAWENAQISGNFGGIRALMSNGLASRKQGDFDGAITVKTAPNVDYLSVKDSYQFTVALTGATPSKTGFLKAGDQLKFTSTHWLNQQSKQTLYNGSTAMSFTATVLEETNSTASGDVTVKLSGVPIYDEKNSQYNAVDAKVKAGDAVSIIGTAKQQMKPNLFYNKFFCGLGTIPLPKLHSLDSAVATYEGFSIRVHKYADGDANKQMMRFDLLPAYVCFNPHMGGQFFGNP</sequence>
<reference key="1">
    <citation type="journal article" date="1999" name="Virology">
        <title>Isolation and characterization of APSE-1, a bacteriophage infecting the secondary endosymbiont of acyrthosiphon pisum.</title>
        <authorList>
            <person name="van der Wilk F."/>
            <person name="Dullemans A.M."/>
            <person name="Verbeek M."/>
            <person name="van den Heuvel J.F.J.M."/>
        </authorList>
    </citation>
    <scope>NUCLEOTIDE SEQUENCE [GENOMIC DNA]</scope>
    <scope>PROTEIN SEQUENCE OF 2-26</scope>
</reference>
<organismHost>
    <name type="scientific">Escherichia coli</name>
    <dbReference type="NCBI Taxonomy" id="562"/>
</organismHost>
<organism>
    <name type="scientific">Acyrthosiphon pisum secondary endosymbiont phage 1</name>
    <name type="common">Bacteriophage APSE-1</name>
    <dbReference type="NCBI Taxonomy" id="2682836"/>
    <lineage>
        <taxon>Viruses</taxon>
        <taxon>Duplodnaviria</taxon>
        <taxon>Heunggongvirae</taxon>
        <taxon>Uroviricota</taxon>
        <taxon>Caudoviricetes</taxon>
        <taxon>Sendosyvirus</taxon>
        <taxon>Sendosyvirus APSE1</taxon>
    </lineage>
</organism>
<proteinExistence type="evidence at protein level"/>
<dbReference type="EMBL" id="AF157835">
    <property type="protein sequence ID" value="AAF03967.1"/>
    <property type="molecule type" value="Genomic_DNA"/>
</dbReference>
<dbReference type="RefSeq" id="NP_050985.1">
    <property type="nucleotide sequence ID" value="NC_000935.1"/>
</dbReference>
<dbReference type="SMR" id="Q9T1S4"/>
<dbReference type="KEGG" id="vg:1262318"/>
<dbReference type="Proteomes" id="UP000000853">
    <property type="component" value="Genome"/>
</dbReference>
<dbReference type="GO" id="GO:0019028">
    <property type="term" value="C:viral capsid"/>
    <property type="evidence" value="ECO:0007669"/>
    <property type="project" value="UniProtKB-KW"/>
</dbReference>
<dbReference type="InterPro" id="IPR024659">
    <property type="entry name" value="Phage_coat_Gp5"/>
</dbReference>
<dbReference type="Pfam" id="PF11651">
    <property type="entry name" value="P22_CoatProtein"/>
    <property type="match status" value="1"/>
</dbReference>
<keyword id="KW-0167">Capsid protein</keyword>
<keyword id="KW-0903">Direct protein sequencing</keyword>
<keyword id="KW-0426">Late protein</keyword>
<keyword id="KW-1185">Reference proteome</keyword>
<keyword id="KW-0946">Virion</keyword>